<organism>
    <name type="scientific">Sulfurisphaera tokodaii (strain DSM 16993 / JCM 10545 / NBRC 100140 / 7)</name>
    <name type="common">Sulfolobus tokodaii</name>
    <dbReference type="NCBI Taxonomy" id="273063"/>
    <lineage>
        <taxon>Archaea</taxon>
        <taxon>Thermoproteota</taxon>
        <taxon>Thermoprotei</taxon>
        <taxon>Sulfolobales</taxon>
        <taxon>Sulfolobaceae</taxon>
        <taxon>Sulfurisphaera</taxon>
    </lineage>
</organism>
<accession>Q972A2</accession>
<gene>
    <name type="primary">aspC</name>
    <name type="ordered locus">STK_12250</name>
</gene>
<sequence length="399" mass="45406">MPVDDFSLSANSISGESTLVYQDVARQVQKTKGIRIINFGIGQPDLPTFARIREAAKKSLDEGFTGYTSAYGIDELRQKIAEHLSSKYESVRKEEVIVTPGAKTALYLAFLLYINPGDEVIIFDPSFYSYAEVVKMLGGVPVYVKMKFNESTGFSLNLSELESKINKKTKMIVLNNPHNPTGMVFDPIEIEKLMEITKEKKVLLLSDEIYDYFIYEGKMKSVLEDPDWRDYVIYVNGFSKTFSMTGWRLGYVVAKEKVIKKMAEIAANIYTCPTSFAQKGALAAFESFDEVKEMISLFKKRRDIMYEELKKIKGIQVHKSQGAFYMFPFIGEILKKANLSVKDFSLKLIEEKGVTTIPGEVFPLEVGKDFVRLSFAVKEDDIREGIKRMKEFIDMLMTP</sequence>
<dbReference type="EC" id="2.6.1.1"/>
<dbReference type="EMBL" id="BA000023">
    <property type="protein sequence ID" value="BAB66267.1"/>
    <property type="molecule type" value="Genomic_DNA"/>
</dbReference>
<dbReference type="RefSeq" id="WP_010979245.1">
    <property type="nucleotide sequence ID" value="NC_003106.2"/>
</dbReference>
<dbReference type="SMR" id="Q972A2"/>
<dbReference type="STRING" id="273063.STK_12250"/>
<dbReference type="GeneID" id="1459224"/>
<dbReference type="KEGG" id="sto:STK_12250"/>
<dbReference type="PATRIC" id="fig|273063.9.peg.1385"/>
<dbReference type="eggNOG" id="arCOG01130">
    <property type="taxonomic scope" value="Archaea"/>
</dbReference>
<dbReference type="OrthoDB" id="372018at2157"/>
<dbReference type="Proteomes" id="UP000001015">
    <property type="component" value="Chromosome"/>
</dbReference>
<dbReference type="GO" id="GO:0005737">
    <property type="term" value="C:cytoplasm"/>
    <property type="evidence" value="ECO:0007669"/>
    <property type="project" value="UniProtKB-SubCell"/>
</dbReference>
<dbReference type="GO" id="GO:0004069">
    <property type="term" value="F:L-aspartate:2-oxoglutarate aminotransferase activity"/>
    <property type="evidence" value="ECO:0007669"/>
    <property type="project" value="UniProtKB-EC"/>
</dbReference>
<dbReference type="GO" id="GO:0030170">
    <property type="term" value="F:pyridoxal phosphate binding"/>
    <property type="evidence" value="ECO:0007669"/>
    <property type="project" value="InterPro"/>
</dbReference>
<dbReference type="GO" id="GO:0006520">
    <property type="term" value="P:amino acid metabolic process"/>
    <property type="evidence" value="ECO:0007669"/>
    <property type="project" value="InterPro"/>
</dbReference>
<dbReference type="GO" id="GO:0009058">
    <property type="term" value="P:biosynthetic process"/>
    <property type="evidence" value="ECO:0007669"/>
    <property type="project" value="InterPro"/>
</dbReference>
<dbReference type="CDD" id="cd00609">
    <property type="entry name" value="AAT_like"/>
    <property type="match status" value="1"/>
</dbReference>
<dbReference type="FunFam" id="3.40.640.10:FF:000033">
    <property type="entry name" value="Aspartate aminotransferase"/>
    <property type="match status" value="1"/>
</dbReference>
<dbReference type="Gene3D" id="3.90.1150.10">
    <property type="entry name" value="Aspartate Aminotransferase, domain 1"/>
    <property type="match status" value="1"/>
</dbReference>
<dbReference type="Gene3D" id="3.40.640.10">
    <property type="entry name" value="Type I PLP-dependent aspartate aminotransferase-like (Major domain)"/>
    <property type="match status" value="1"/>
</dbReference>
<dbReference type="InterPro" id="IPR004839">
    <property type="entry name" value="Aminotransferase_I/II_large"/>
</dbReference>
<dbReference type="InterPro" id="IPR050596">
    <property type="entry name" value="AspAT/PAT-like"/>
</dbReference>
<dbReference type="InterPro" id="IPR004838">
    <property type="entry name" value="NHTrfase_class1_PyrdxlP-BS"/>
</dbReference>
<dbReference type="InterPro" id="IPR015424">
    <property type="entry name" value="PyrdxlP-dep_Trfase"/>
</dbReference>
<dbReference type="InterPro" id="IPR015421">
    <property type="entry name" value="PyrdxlP-dep_Trfase_major"/>
</dbReference>
<dbReference type="InterPro" id="IPR015422">
    <property type="entry name" value="PyrdxlP-dep_Trfase_small"/>
</dbReference>
<dbReference type="PANTHER" id="PTHR46383">
    <property type="entry name" value="ASPARTATE AMINOTRANSFERASE"/>
    <property type="match status" value="1"/>
</dbReference>
<dbReference type="PANTHER" id="PTHR46383:SF1">
    <property type="entry name" value="ASPARTATE AMINOTRANSFERASE"/>
    <property type="match status" value="1"/>
</dbReference>
<dbReference type="Pfam" id="PF00155">
    <property type="entry name" value="Aminotran_1_2"/>
    <property type="match status" value="1"/>
</dbReference>
<dbReference type="SUPFAM" id="SSF53383">
    <property type="entry name" value="PLP-dependent transferases"/>
    <property type="match status" value="1"/>
</dbReference>
<dbReference type="PROSITE" id="PS00105">
    <property type="entry name" value="AA_TRANSFER_CLASS_1"/>
    <property type="match status" value="1"/>
</dbReference>
<proteinExistence type="inferred from homology"/>
<protein>
    <recommendedName>
        <fullName>Aspartate aminotransferase</fullName>
        <shortName>AspAT</shortName>
        <ecNumber>2.6.1.1</ecNumber>
    </recommendedName>
    <alternativeName>
        <fullName>Transaminase A</fullName>
    </alternativeName>
</protein>
<feature type="chain" id="PRO_0000123865" description="Aspartate aminotransferase">
    <location>
        <begin position="1"/>
        <end position="399"/>
    </location>
</feature>
<feature type="binding site" evidence="1">
    <location>
        <position position="42"/>
    </location>
    <ligand>
        <name>L-aspartate</name>
        <dbReference type="ChEBI" id="CHEBI:29991"/>
    </ligand>
</feature>
<feature type="binding site" evidence="1">
    <location>
        <position position="179"/>
    </location>
    <ligand>
        <name>L-aspartate</name>
        <dbReference type="ChEBI" id="CHEBI:29991"/>
    </ligand>
</feature>
<feature type="binding site" evidence="1">
    <location>
        <position position="372"/>
    </location>
    <ligand>
        <name>L-aspartate</name>
        <dbReference type="ChEBI" id="CHEBI:29991"/>
    </ligand>
</feature>
<feature type="modified residue" description="N6-(pyridoxal phosphate)lysine" evidence="1">
    <location>
        <position position="240"/>
    </location>
</feature>
<evidence type="ECO:0000250" key="1"/>
<evidence type="ECO:0000305" key="2"/>
<comment type="catalytic activity">
    <reaction>
        <text>L-aspartate + 2-oxoglutarate = oxaloacetate + L-glutamate</text>
        <dbReference type="Rhea" id="RHEA:21824"/>
        <dbReference type="ChEBI" id="CHEBI:16452"/>
        <dbReference type="ChEBI" id="CHEBI:16810"/>
        <dbReference type="ChEBI" id="CHEBI:29985"/>
        <dbReference type="ChEBI" id="CHEBI:29991"/>
        <dbReference type="EC" id="2.6.1.1"/>
    </reaction>
</comment>
<comment type="cofactor">
    <cofactor evidence="1">
        <name>pyridoxal 5'-phosphate</name>
        <dbReference type="ChEBI" id="CHEBI:597326"/>
    </cofactor>
</comment>
<comment type="subunit">
    <text evidence="1">Homodimer.</text>
</comment>
<comment type="subcellular location">
    <subcellularLocation>
        <location evidence="1">Cytoplasm</location>
    </subcellularLocation>
</comment>
<comment type="similarity">
    <text evidence="2">Belongs to the class-I pyridoxal-phosphate-dependent aminotransferase family.</text>
</comment>
<name>AAT_SULTO</name>
<keyword id="KW-0032">Aminotransferase</keyword>
<keyword id="KW-0963">Cytoplasm</keyword>
<keyword id="KW-0663">Pyridoxal phosphate</keyword>
<keyword id="KW-1185">Reference proteome</keyword>
<keyword id="KW-0808">Transferase</keyword>
<reference key="1">
    <citation type="journal article" date="2001" name="DNA Res.">
        <title>Complete genome sequence of an aerobic thermoacidophilic Crenarchaeon, Sulfolobus tokodaii strain7.</title>
        <authorList>
            <person name="Kawarabayasi Y."/>
            <person name="Hino Y."/>
            <person name="Horikawa H."/>
            <person name="Jin-no K."/>
            <person name="Takahashi M."/>
            <person name="Sekine M."/>
            <person name="Baba S."/>
            <person name="Ankai A."/>
            <person name="Kosugi H."/>
            <person name="Hosoyama A."/>
            <person name="Fukui S."/>
            <person name="Nagai Y."/>
            <person name="Nishijima K."/>
            <person name="Otsuka R."/>
            <person name="Nakazawa H."/>
            <person name="Takamiya M."/>
            <person name="Kato Y."/>
            <person name="Yoshizawa T."/>
            <person name="Tanaka T."/>
            <person name="Kudoh Y."/>
            <person name="Yamazaki J."/>
            <person name="Kushida N."/>
            <person name="Oguchi A."/>
            <person name="Aoki K."/>
            <person name="Masuda S."/>
            <person name="Yanagii M."/>
            <person name="Nishimura M."/>
            <person name="Yamagishi A."/>
            <person name="Oshima T."/>
            <person name="Kikuchi H."/>
        </authorList>
    </citation>
    <scope>NUCLEOTIDE SEQUENCE [LARGE SCALE GENOMIC DNA]</scope>
    <source>
        <strain>DSM 16993 / JCM 10545 / NBRC 100140 / 7</strain>
    </source>
</reference>